<feature type="signal peptide" evidence="3">
    <location>
        <begin position="1"/>
        <end position="26"/>
    </location>
</feature>
<feature type="chain" id="PRO_0000016799" description="Ephrin type-A receptor 1" evidence="1">
    <location>
        <begin position="27"/>
        <end position="977"/>
    </location>
</feature>
<feature type="topological domain" description="Extracellular" evidence="3">
    <location>
        <begin position="27"/>
        <end position="548"/>
    </location>
</feature>
<feature type="transmembrane region" description="Helical" evidence="3">
    <location>
        <begin position="549"/>
        <end position="569"/>
    </location>
</feature>
<feature type="topological domain" description="Cytoplasmic" evidence="3">
    <location>
        <begin position="570"/>
        <end position="977"/>
    </location>
</feature>
<feature type="domain" description="Eph LBD" evidence="7">
    <location>
        <begin position="28"/>
        <end position="210"/>
    </location>
</feature>
<feature type="domain" description="Fibronectin type-III 1" evidence="6">
    <location>
        <begin position="333"/>
        <end position="446"/>
    </location>
</feature>
<feature type="domain" description="Fibronectin type-III 2" evidence="6">
    <location>
        <begin position="448"/>
        <end position="539"/>
    </location>
</feature>
<feature type="domain" description="Protein kinase" evidence="4">
    <location>
        <begin position="625"/>
        <end position="885"/>
    </location>
</feature>
<feature type="domain" description="SAM" evidence="5">
    <location>
        <begin position="914"/>
        <end position="977"/>
    </location>
</feature>
<feature type="short sequence motif" description="PDZ-binding" evidence="3">
    <location>
        <begin position="975"/>
        <end position="977"/>
    </location>
</feature>
<feature type="active site" description="Proton acceptor" evidence="4 8">
    <location>
        <position position="750"/>
    </location>
</feature>
<feature type="binding site" evidence="4">
    <location>
        <begin position="631"/>
        <end position="639"/>
    </location>
    <ligand>
        <name>ATP</name>
        <dbReference type="ChEBI" id="CHEBI:30616"/>
    </ligand>
</feature>
<feature type="binding site" evidence="4">
    <location>
        <position position="657"/>
    </location>
    <ligand>
        <name>ATP</name>
        <dbReference type="ChEBI" id="CHEBI:30616"/>
    </ligand>
</feature>
<feature type="modified residue" description="Phosphotyrosine; by autocatalysis" evidence="3">
    <location>
        <position position="600"/>
    </location>
</feature>
<feature type="modified residue" description="Phosphotyrosine; by autocatalysis" evidence="3">
    <location>
        <position position="606"/>
    </location>
</feature>
<feature type="modified residue" description="Phosphotyrosine; by autocatalysis" evidence="1">
    <location>
        <position position="782"/>
    </location>
</feature>
<feature type="modified residue" description="Phosphoserine" evidence="2">
    <location>
        <position position="907"/>
    </location>
</feature>
<feature type="modified residue" description="Phosphoserine" evidence="2">
    <location>
        <position position="911"/>
    </location>
</feature>
<feature type="glycosylation site" description="N-linked (GlcNAc...) asparagine" evidence="3">
    <location>
        <position position="415"/>
    </location>
</feature>
<feature type="glycosylation site" description="N-linked (GlcNAc...) asparagine" evidence="3">
    <location>
        <position position="479"/>
    </location>
</feature>
<feature type="sequence conflict" description="In Ref. 1; AAG12206." evidence="12" ref="1">
    <original>G</original>
    <variation>D</variation>
    <location>
        <position position="163"/>
    </location>
</feature>
<feature type="sequence conflict" description="In Ref. 3; AAC52384." evidence="12" ref="3">
    <original>S</original>
    <variation>P</variation>
    <location>
        <position position="422"/>
    </location>
</feature>
<feature type="sequence conflict" description="In Ref. 3; AAC52384." evidence="12" ref="3">
    <original>L</original>
    <variation>R</variation>
    <location>
        <position position="504"/>
    </location>
</feature>
<feature type="sequence conflict" description="In Ref. 3; AAC52384." evidence="12" ref="3">
    <original>T</original>
    <variation>A</variation>
    <location>
        <position position="521"/>
    </location>
</feature>
<feature type="sequence conflict" description="In Ref. 3; AAC52384." evidence="12" ref="3">
    <original>D</original>
    <variation>G</variation>
    <location>
        <position position="590"/>
    </location>
</feature>
<feature type="sequence conflict" description="In Ref. 3; AAC52384." evidence="12" ref="3">
    <original>F</original>
    <variation>Y</variation>
    <location>
        <position position="636"/>
    </location>
</feature>
<feature type="sequence conflict" description="In Ref. 3; AAC52384." evidence="12" ref="3">
    <original>K</original>
    <variation>R</variation>
    <location>
        <position position="660"/>
    </location>
</feature>
<feature type="sequence conflict" description="In Ref. 3; AAC52384." evidence="12" ref="3">
    <original>D</original>
    <variation>G</variation>
    <location>
        <position position="720"/>
    </location>
</feature>
<feature type="sequence conflict" description="In Ref. 3; AAC52384." evidence="12" ref="3">
    <original>F</original>
    <variation>L</variation>
    <location>
        <position position="769"/>
    </location>
</feature>
<feature type="sequence conflict" description="In Ref. 3; AAC52384." evidence="12" ref="3">
    <original>E</original>
    <variation>G</variation>
    <location>
        <position position="797"/>
    </location>
</feature>
<feature type="sequence conflict" description="In Ref. 1; AAG12206." evidence="12" ref="1">
    <original>M</original>
    <variation>T</variation>
    <location>
        <position position="817"/>
    </location>
</feature>
<feature type="strand" evidence="13">
    <location>
        <begin position="456"/>
        <end position="460"/>
    </location>
</feature>
<feature type="strand" evidence="13">
    <location>
        <begin position="463"/>
        <end position="467"/>
    </location>
</feature>
<feature type="strand" evidence="13">
    <location>
        <begin position="481"/>
        <end position="487"/>
    </location>
</feature>
<feature type="strand" evidence="13">
    <location>
        <begin position="492"/>
        <end position="506"/>
    </location>
</feature>
<feature type="strand" evidence="13">
    <location>
        <begin position="512"/>
        <end position="520"/>
    </location>
</feature>
<feature type="strand" evidence="13">
    <location>
        <begin position="522"/>
        <end position="524"/>
    </location>
</feature>
<feature type="strand" evidence="13">
    <location>
        <begin position="532"/>
        <end position="535"/>
    </location>
</feature>
<dbReference type="EC" id="2.7.10.1"/>
<dbReference type="EMBL" id="AF131197">
    <property type="protein sequence ID" value="AAG12206.1"/>
    <property type="molecule type" value="mRNA"/>
</dbReference>
<dbReference type="EMBL" id="AK028478">
    <property type="protein sequence ID" value="BAC25971.1"/>
    <property type="molecule type" value="mRNA"/>
</dbReference>
<dbReference type="EMBL" id="U18084">
    <property type="protein sequence ID" value="AAC52384.1"/>
    <property type="molecule type" value="mRNA"/>
</dbReference>
<dbReference type="CCDS" id="CCDS20067.1"/>
<dbReference type="RefSeq" id="NP_076069.2">
    <property type="nucleotide sequence ID" value="NM_023580.4"/>
</dbReference>
<dbReference type="PDB" id="1X5A">
    <property type="method" value="NMR"/>
    <property type="chains" value="A=446-539"/>
</dbReference>
<dbReference type="PDBsum" id="1X5A"/>
<dbReference type="BMRB" id="Q60750"/>
<dbReference type="SMR" id="Q60750"/>
<dbReference type="BioGRID" id="199468">
    <property type="interactions" value="1"/>
</dbReference>
<dbReference type="FunCoup" id="Q60750">
    <property type="interactions" value="68"/>
</dbReference>
<dbReference type="IntAct" id="Q60750">
    <property type="interactions" value="4"/>
</dbReference>
<dbReference type="MINT" id="Q60750"/>
<dbReference type="STRING" id="10090.ENSMUSP00000073099"/>
<dbReference type="GlyCosmos" id="Q60750">
    <property type="glycosylation" value="2 sites, No reported glycans"/>
</dbReference>
<dbReference type="GlyGen" id="Q60750">
    <property type="glycosylation" value="2 sites"/>
</dbReference>
<dbReference type="iPTMnet" id="Q60750"/>
<dbReference type="PhosphoSitePlus" id="Q60750"/>
<dbReference type="PaxDb" id="10090-ENSMUSP00000073099"/>
<dbReference type="PeptideAtlas" id="Q60750"/>
<dbReference type="ProteomicsDB" id="277884"/>
<dbReference type="Antibodypedia" id="32658">
    <property type="antibodies" value="622 antibodies from 39 providers"/>
</dbReference>
<dbReference type="DNASU" id="13835"/>
<dbReference type="Ensembl" id="ENSMUST00000073387.5">
    <property type="protein sequence ID" value="ENSMUSP00000073099.3"/>
    <property type="gene ID" value="ENSMUSG00000029859.7"/>
</dbReference>
<dbReference type="GeneID" id="13835"/>
<dbReference type="KEGG" id="mmu:13835"/>
<dbReference type="UCSC" id="uc009brc.1">
    <property type="organism name" value="mouse"/>
</dbReference>
<dbReference type="AGR" id="MGI:107381"/>
<dbReference type="CTD" id="2041"/>
<dbReference type="MGI" id="MGI:107381">
    <property type="gene designation" value="Epha1"/>
</dbReference>
<dbReference type="VEuPathDB" id="HostDB:ENSMUSG00000029859"/>
<dbReference type="eggNOG" id="KOG0196">
    <property type="taxonomic scope" value="Eukaryota"/>
</dbReference>
<dbReference type="GeneTree" id="ENSGT00940000160920"/>
<dbReference type="HOGENOM" id="CLU_000288_141_0_1"/>
<dbReference type="InParanoid" id="Q60750"/>
<dbReference type="OMA" id="SCWSHDR"/>
<dbReference type="OrthoDB" id="4062651at2759"/>
<dbReference type="PhylomeDB" id="Q60750"/>
<dbReference type="TreeFam" id="TF315363"/>
<dbReference type="Reactome" id="R-MMU-2682334">
    <property type="pathway name" value="EPH-Ephrin signaling"/>
</dbReference>
<dbReference type="Reactome" id="R-MMU-3928663">
    <property type="pathway name" value="EPHA-mediated growth cone collapse"/>
</dbReference>
<dbReference type="Reactome" id="R-MMU-3928665">
    <property type="pathway name" value="EPH-ephrin mediated repulsion of cells"/>
</dbReference>
<dbReference type="BioGRID-ORCS" id="13835">
    <property type="hits" value="2 hits in 79 CRISPR screens"/>
</dbReference>
<dbReference type="ChiTaRS" id="Epha1">
    <property type="organism name" value="mouse"/>
</dbReference>
<dbReference type="EvolutionaryTrace" id="Q60750"/>
<dbReference type="PRO" id="PR:Q60750"/>
<dbReference type="Proteomes" id="UP000000589">
    <property type="component" value="Chromosome 6"/>
</dbReference>
<dbReference type="RNAct" id="Q60750">
    <property type="molecule type" value="protein"/>
</dbReference>
<dbReference type="Bgee" id="ENSMUSG00000029859">
    <property type="expression patterns" value="Expressed in lip and 98 other cell types or tissues"/>
</dbReference>
<dbReference type="ExpressionAtlas" id="Q60750">
    <property type="expression patterns" value="baseline and differential"/>
</dbReference>
<dbReference type="GO" id="GO:0005886">
    <property type="term" value="C:plasma membrane"/>
    <property type="evidence" value="ECO:0000250"/>
    <property type="project" value="UniProtKB"/>
</dbReference>
<dbReference type="GO" id="GO:0005524">
    <property type="term" value="F:ATP binding"/>
    <property type="evidence" value="ECO:0007669"/>
    <property type="project" value="UniProtKB-KW"/>
</dbReference>
<dbReference type="GO" id="GO:0005003">
    <property type="term" value="F:ephrin receptor activity"/>
    <property type="evidence" value="ECO:0000314"/>
    <property type="project" value="ARUK-UCL"/>
</dbReference>
<dbReference type="GO" id="GO:0001968">
    <property type="term" value="F:fibronectin binding"/>
    <property type="evidence" value="ECO:0007669"/>
    <property type="project" value="Ensembl"/>
</dbReference>
<dbReference type="GO" id="GO:0004672">
    <property type="term" value="F:protein kinase activity"/>
    <property type="evidence" value="ECO:0000250"/>
    <property type="project" value="UniProtKB"/>
</dbReference>
<dbReference type="GO" id="GO:0019901">
    <property type="term" value="F:protein kinase binding"/>
    <property type="evidence" value="ECO:0007669"/>
    <property type="project" value="Ensembl"/>
</dbReference>
<dbReference type="GO" id="GO:0005005">
    <property type="term" value="F:transmembrane-ephrin receptor activity"/>
    <property type="evidence" value="ECO:0000250"/>
    <property type="project" value="UniProtKB"/>
</dbReference>
<dbReference type="GO" id="GO:0001525">
    <property type="term" value="P:angiogenesis"/>
    <property type="evidence" value="ECO:0007669"/>
    <property type="project" value="UniProtKB-KW"/>
</dbReference>
<dbReference type="GO" id="GO:0007169">
    <property type="term" value="P:cell surface receptor protein tyrosine kinase signaling pathway"/>
    <property type="evidence" value="ECO:0000250"/>
    <property type="project" value="UniProtKB"/>
</dbReference>
<dbReference type="GO" id="GO:0030336">
    <property type="term" value="P:negative regulation of cell migration"/>
    <property type="evidence" value="ECO:0000250"/>
    <property type="project" value="UniProtKB"/>
</dbReference>
<dbReference type="GO" id="GO:0045766">
    <property type="term" value="P:positive regulation of angiogenesis"/>
    <property type="evidence" value="ECO:0000250"/>
    <property type="project" value="UniProtKB"/>
</dbReference>
<dbReference type="GO" id="GO:0030335">
    <property type="term" value="P:positive regulation of cell migration"/>
    <property type="evidence" value="ECO:0000250"/>
    <property type="project" value="UniProtKB"/>
</dbReference>
<dbReference type="GO" id="GO:0001954">
    <property type="term" value="P:positive regulation of cell-matrix adhesion"/>
    <property type="evidence" value="ECO:0000250"/>
    <property type="project" value="UniProtKB"/>
</dbReference>
<dbReference type="GO" id="GO:0051496">
    <property type="term" value="P:positive regulation of stress fiber assembly"/>
    <property type="evidence" value="ECO:0000314"/>
    <property type="project" value="UniProtKB"/>
</dbReference>
<dbReference type="GO" id="GO:0034446">
    <property type="term" value="P:substrate adhesion-dependent cell spreading"/>
    <property type="evidence" value="ECO:0000250"/>
    <property type="project" value="UniProtKB"/>
</dbReference>
<dbReference type="CDD" id="cd10479">
    <property type="entry name" value="EphR_LBD_A1"/>
    <property type="match status" value="1"/>
</dbReference>
<dbReference type="CDD" id="cd00063">
    <property type="entry name" value="FN3"/>
    <property type="match status" value="2"/>
</dbReference>
<dbReference type="CDD" id="cd09542">
    <property type="entry name" value="SAM_EPH-A1"/>
    <property type="match status" value="1"/>
</dbReference>
<dbReference type="CDD" id="cd12841">
    <property type="entry name" value="TM_EphA1"/>
    <property type="match status" value="1"/>
</dbReference>
<dbReference type="FunFam" id="1.10.150.50:FF:000029">
    <property type="entry name" value="Ephrin type-A receptor 1"/>
    <property type="match status" value="1"/>
</dbReference>
<dbReference type="FunFam" id="2.60.40.10:FF:000626">
    <property type="entry name" value="Ephrin type-A receptor 1"/>
    <property type="match status" value="1"/>
</dbReference>
<dbReference type="FunFam" id="3.30.200.20:FF:000317">
    <property type="entry name" value="Ephrin type-A receptor 1"/>
    <property type="match status" value="1"/>
</dbReference>
<dbReference type="FunFam" id="2.60.120.260:FF:000023">
    <property type="entry name" value="Ephrin type-A receptor 2"/>
    <property type="match status" value="1"/>
</dbReference>
<dbReference type="FunFam" id="2.10.50.10:FF:000001">
    <property type="entry name" value="Ephrin type-A receptor 5"/>
    <property type="match status" value="1"/>
</dbReference>
<dbReference type="FunFam" id="2.60.40.1770:FF:000001">
    <property type="entry name" value="Ephrin type-A receptor 5"/>
    <property type="match status" value="1"/>
</dbReference>
<dbReference type="FunFam" id="2.60.40.10:FF:000059">
    <property type="entry name" value="Ephrin type-A receptor 6"/>
    <property type="match status" value="1"/>
</dbReference>
<dbReference type="FunFam" id="1.10.510.10:FF:000268">
    <property type="entry name" value="Receptor protein-tyrosine kinase"/>
    <property type="match status" value="1"/>
</dbReference>
<dbReference type="Gene3D" id="2.60.40.1770">
    <property type="entry name" value="ephrin a2 ectodomain"/>
    <property type="match status" value="1"/>
</dbReference>
<dbReference type="Gene3D" id="2.60.120.260">
    <property type="entry name" value="Galactose-binding domain-like"/>
    <property type="match status" value="1"/>
</dbReference>
<dbReference type="Gene3D" id="2.60.40.10">
    <property type="entry name" value="Immunoglobulins"/>
    <property type="match status" value="2"/>
</dbReference>
<dbReference type="Gene3D" id="3.30.200.20">
    <property type="entry name" value="Phosphorylase Kinase, domain 1"/>
    <property type="match status" value="1"/>
</dbReference>
<dbReference type="Gene3D" id="1.10.150.50">
    <property type="entry name" value="Transcription Factor, Ets-1"/>
    <property type="match status" value="1"/>
</dbReference>
<dbReference type="Gene3D" id="1.10.510.10">
    <property type="entry name" value="Transferase(Phosphotransferase) domain 1"/>
    <property type="match status" value="1"/>
</dbReference>
<dbReference type="Gene3D" id="2.10.50.10">
    <property type="entry name" value="Tumor Necrosis Factor Receptor, subunit A, domain 2"/>
    <property type="match status" value="1"/>
</dbReference>
<dbReference type="InterPro" id="IPR027936">
    <property type="entry name" value="Eph_TM"/>
</dbReference>
<dbReference type="InterPro" id="IPR034251">
    <property type="entry name" value="EphA1_rcpt_lig-bd"/>
</dbReference>
<dbReference type="InterPro" id="IPR001090">
    <property type="entry name" value="Ephrin_rcpt_lig-bd_dom"/>
</dbReference>
<dbReference type="InterPro" id="IPR050449">
    <property type="entry name" value="Ephrin_rcpt_TKs"/>
</dbReference>
<dbReference type="InterPro" id="IPR003961">
    <property type="entry name" value="FN3_dom"/>
</dbReference>
<dbReference type="InterPro" id="IPR036116">
    <property type="entry name" value="FN3_sf"/>
</dbReference>
<dbReference type="InterPro" id="IPR008979">
    <property type="entry name" value="Galactose-bd-like_sf"/>
</dbReference>
<dbReference type="InterPro" id="IPR009030">
    <property type="entry name" value="Growth_fac_rcpt_cys_sf"/>
</dbReference>
<dbReference type="InterPro" id="IPR013783">
    <property type="entry name" value="Ig-like_fold"/>
</dbReference>
<dbReference type="InterPro" id="IPR011009">
    <property type="entry name" value="Kinase-like_dom_sf"/>
</dbReference>
<dbReference type="InterPro" id="IPR000719">
    <property type="entry name" value="Prot_kinase_dom"/>
</dbReference>
<dbReference type="InterPro" id="IPR017441">
    <property type="entry name" value="Protein_kinase_ATP_BS"/>
</dbReference>
<dbReference type="InterPro" id="IPR001660">
    <property type="entry name" value="SAM"/>
</dbReference>
<dbReference type="InterPro" id="IPR013761">
    <property type="entry name" value="SAM/pointed_sf"/>
</dbReference>
<dbReference type="InterPro" id="IPR001245">
    <property type="entry name" value="Ser-Thr/Tyr_kinase_cat_dom"/>
</dbReference>
<dbReference type="InterPro" id="IPR011641">
    <property type="entry name" value="Tyr-kin_ephrin_A/B_rcpt-like"/>
</dbReference>
<dbReference type="InterPro" id="IPR008266">
    <property type="entry name" value="Tyr_kinase_AS"/>
</dbReference>
<dbReference type="InterPro" id="IPR020635">
    <property type="entry name" value="Tyr_kinase_cat_dom"/>
</dbReference>
<dbReference type="InterPro" id="IPR016257">
    <property type="entry name" value="Tyr_kinase_ephrin_rcpt"/>
</dbReference>
<dbReference type="InterPro" id="IPR001426">
    <property type="entry name" value="Tyr_kinase_rcpt_V_CS"/>
</dbReference>
<dbReference type="PANTHER" id="PTHR46877">
    <property type="entry name" value="EPH RECEPTOR A5"/>
    <property type="match status" value="1"/>
</dbReference>
<dbReference type="PANTHER" id="PTHR46877:SF20">
    <property type="entry name" value="RECEPTOR PROTEIN-TYROSINE KINASE"/>
    <property type="match status" value="1"/>
</dbReference>
<dbReference type="Pfam" id="PF14575">
    <property type="entry name" value="EphA2_TM"/>
    <property type="match status" value="1"/>
</dbReference>
<dbReference type="Pfam" id="PF01404">
    <property type="entry name" value="Ephrin_lbd"/>
    <property type="match status" value="1"/>
</dbReference>
<dbReference type="Pfam" id="PF07699">
    <property type="entry name" value="Ephrin_rec_like"/>
    <property type="match status" value="1"/>
</dbReference>
<dbReference type="Pfam" id="PF00041">
    <property type="entry name" value="fn3"/>
    <property type="match status" value="2"/>
</dbReference>
<dbReference type="Pfam" id="PF07714">
    <property type="entry name" value="PK_Tyr_Ser-Thr"/>
    <property type="match status" value="1"/>
</dbReference>
<dbReference type="Pfam" id="PF00536">
    <property type="entry name" value="SAM_1"/>
    <property type="match status" value="1"/>
</dbReference>
<dbReference type="PIRSF" id="PIRSF000666">
    <property type="entry name" value="TyrPK_ephrin_receptor"/>
    <property type="match status" value="1"/>
</dbReference>
<dbReference type="PRINTS" id="PR00109">
    <property type="entry name" value="TYRKINASE"/>
</dbReference>
<dbReference type="SMART" id="SM00615">
    <property type="entry name" value="EPH_lbd"/>
    <property type="match status" value="1"/>
</dbReference>
<dbReference type="SMART" id="SM01411">
    <property type="entry name" value="Ephrin_rec_like"/>
    <property type="match status" value="1"/>
</dbReference>
<dbReference type="SMART" id="SM00060">
    <property type="entry name" value="FN3"/>
    <property type="match status" value="2"/>
</dbReference>
<dbReference type="SMART" id="SM00454">
    <property type="entry name" value="SAM"/>
    <property type="match status" value="1"/>
</dbReference>
<dbReference type="SMART" id="SM00219">
    <property type="entry name" value="TyrKc"/>
    <property type="match status" value="1"/>
</dbReference>
<dbReference type="SUPFAM" id="SSF49265">
    <property type="entry name" value="Fibronectin type III"/>
    <property type="match status" value="1"/>
</dbReference>
<dbReference type="SUPFAM" id="SSF49785">
    <property type="entry name" value="Galactose-binding domain-like"/>
    <property type="match status" value="1"/>
</dbReference>
<dbReference type="SUPFAM" id="SSF57184">
    <property type="entry name" value="Growth factor receptor domain"/>
    <property type="match status" value="1"/>
</dbReference>
<dbReference type="SUPFAM" id="SSF56112">
    <property type="entry name" value="Protein kinase-like (PK-like)"/>
    <property type="match status" value="1"/>
</dbReference>
<dbReference type="SUPFAM" id="SSF47769">
    <property type="entry name" value="SAM/Pointed domain"/>
    <property type="match status" value="1"/>
</dbReference>
<dbReference type="PROSITE" id="PS01186">
    <property type="entry name" value="EGF_2"/>
    <property type="match status" value="1"/>
</dbReference>
<dbReference type="PROSITE" id="PS51550">
    <property type="entry name" value="EPH_LBD"/>
    <property type="match status" value="1"/>
</dbReference>
<dbReference type="PROSITE" id="PS50853">
    <property type="entry name" value="FN3"/>
    <property type="match status" value="2"/>
</dbReference>
<dbReference type="PROSITE" id="PS00107">
    <property type="entry name" value="PROTEIN_KINASE_ATP"/>
    <property type="match status" value="1"/>
</dbReference>
<dbReference type="PROSITE" id="PS50011">
    <property type="entry name" value="PROTEIN_KINASE_DOM"/>
    <property type="match status" value="1"/>
</dbReference>
<dbReference type="PROSITE" id="PS00109">
    <property type="entry name" value="PROTEIN_KINASE_TYR"/>
    <property type="match status" value="1"/>
</dbReference>
<dbReference type="PROSITE" id="PS00790">
    <property type="entry name" value="RECEPTOR_TYR_KIN_V_1"/>
    <property type="match status" value="1"/>
</dbReference>
<dbReference type="PROSITE" id="PS00791">
    <property type="entry name" value="RECEPTOR_TYR_KIN_V_2"/>
    <property type="match status" value="1"/>
</dbReference>
<dbReference type="PROSITE" id="PS50105">
    <property type="entry name" value="SAM_DOMAIN"/>
    <property type="match status" value="1"/>
</dbReference>
<organism>
    <name type="scientific">Mus musculus</name>
    <name type="common">Mouse</name>
    <dbReference type="NCBI Taxonomy" id="10090"/>
    <lineage>
        <taxon>Eukaryota</taxon>
        <taxon>Metazoa</taxon>
        <taxon>Chordata</taxon>
        <taxon>Craniata</taxon>
        <taxon>Vertebrata</taxon>
        <taxon>Euteleostomi</taxon>
        <taxon>Mammalia</taxon>
        <taxon>Eutheria</taxon>
        <taxon>Euarchontoglires</taxon>
        <taxon>Glires</taxon>
        <taxon>Rodentia</taxon>
        <taxon>Myomorpha</taxon>
        <taxon>Muroidea</taxon>
        <taxon>Muridae</taxon>
        <taxon>Murinae</taxon>
        <taxon>Mus</taxon>
        <taxon>Mus</taxon>
    </lineage>
</organism>
<protein>
    <recommendedName>
        <fullName>Ephrin type-A receptor 1</fullName>
        <shortName>mEpha1</shortName>
        <ecNumber>2.7.10.1</ecNumber>
    </recommendedName>
    <alternativeName>
        <fullName>Embryonic stem cell kinase</fullName>
    </alternativeName>
    <alternativeName>
        <fullName>Tyrosine-protein kinase receptor ESK</fullName>
    </alternativeName>
</protein>
<keyword id="KW-0002">3D-structure</keyword>
<keyword id="KW-0037">Angiogenesis</keyword>
<keyword id="KW-0067">ATP-binding</keyword>
<keyword id="KW-0130">Cell adhesion</keyword>
<keyword id="KW-1003">Cell membrane</keyword>
<keyword id="KW-0325">Glycoprotein</keyword>
<keyword id="KW-0418">Kinase</keyword>
<keyword id="KW-0472">Membrane</keyword>
<keyword id="KW-0547">Nucleotide-binding</keyword>
<keyword id="KW-0597">Phosphoprotein</keyword>
<keyword id="KW-0675">Receptor</keyword>
<keyword id="KW-1185">Reference proteome</keyword>
<keyword id="KW-0677">Repeat</keyword>
<keyword id="KW-0732">Signal</keyword>
<keyword id="KW-0808">Transferase</keyword>
<keyword id="KW-0812">Transmembrane</keyword>
<keyword id="KW-1133">Transmembrane helix</keyword>
<keyword id="KW-0829">Tyrosine-protein kinase</keyword>
<keyword id="KW-0832">Ubl conjugation</keyword>
<reference key="1">
    <citation type="journal article" date="2001" name="Growth Factors">
        <title>Characterization of the Epha1 receptor tyrosine kinase: expression in epithelial tissues.</title>
        <authorList>
            <person name="Coulthard M.G."/>
            <person name="Lickliter J.D."/>
            <person name="Subanesan N."/>
            <person name="Chen K."/>
            <person name="Webb G.C."/>
            <person name="Lowry A.J."/>
            <person name="Koblar S."/>
            <person name="Bottema C.D."/>
            <person name="Boyd A.W."/>
        </authorList>
    </citation>
    <scope>NUCLEOTIDE SEQUENCE [MRNA]</scope>
    <scope>TISSUE SPECIFICITY</scope>
    <scope>EFNA1 LIGAND-BINDING</scope>
</reference>
<reference key="2">
    <citation type="journal article" date="2005" name="Science">
        <title>The transcriptional landscape of the mammalian genome.</title>
        <authorList>
            <person name="Carninci P."/>
            <person name="Kasukawa T."/>
            <person name="Katayama S."/>
            <person name="Gough J."/>
            <person name="Frith M.C."/>
            <person name="Maeda N."/>
            <person name="Oyama R."/>
            <person name="Ravasi T."/>
            <person name="Lenhard B."/>
            <person name="Wells C."/>
            <person name="Kodzius R."/>
            <person name="Shimokawa K."/>
            <person name="Bajic V.B."/>
            <person name="Brenner S.E."/>
            <person name="Batalov S."/>
            <person name="Forrest A.R."/>
            <person name="Zavolan M."/>
            <person name="Davis M.J."/>
            <person name="Wilming L.G."/>
            <person name="Aidinis V."/>
            <person name="Allen J.E."/>
            <person name="Ambesi-Impiombato A."/>
            <person name="Apweiler R."/>
            <person name="Aturaliya R.N."/>
            <person name="Bailey T.L."/>
            <person name="Bansal M."/>
            <person name="Baxter L."/>
            <person name="Beisel K.W."/>
            <person name="Bersano T."/>
            <person name="Bono H."/>
            <person name="Chalk A.M."/>
            <person name="Chiu K.P."/>
            <person name="Choudhary V."/>
            <person name="Christoffels A."/>
            <person name="Clutterbuck D.R."/>
            <person name="Crowe M.L."/>
            <person name="Dalla E."/>
            <person name="Dalrymple B.P."/>
            <person name="de Bono B."/>
            <person name="Della Gatta G."/>
            <person name="di Bernardo D."/>
            <person name="Down T."/>
            <person name="Engstrom P."/>
            <person name="Fagiolini M."/>
            <person name="Faulkner G."/>
            <person name="Fletcher C.F."/>
            <person name="Fukushima T."/>
            <person name="Furuno M."/>
            <person name="Futaki S."/>
            <person name="Gariboldi M."/>
            <person name="Georgii-Hemming P."/>
            <person name="Gingeras T.R."/>
            <person name="Gojobori T."/>
            <person name="Green R.E."/>
            <person name="Gustincich S."/>
            <person name="Harbers M."/>
            <person name="Hayashi Y."/>
            <person name="Hensch T.K."/>
            <person name="Hirokawa N."/>
            <person name="Hill D."/>
            <person name="Huminiecki L."/>
            <person name="Iacono M."/>
            <person name="Ikeo K."/>
            <person name="Iwama A."/>
            <person name="Ishikawa T."/>
            <person name="Jakt M."/>
            <person name="Kanapin A."/>
            <person name="Katoh M."/>
            <person name="Kawasawa Y."/>
            <person name="Kelso J."/>
            <person name="Kitamura H."/>
            <person name="Kitano H."/>
            <person name="Kollias G."/>
            <person name="Krishnan S.P."/>
            <person name="Kruger A."/>
            <person name="Kummerfeld S.K."/>
            <person name="Kurochkin I.V."/>
            <person name="Lareau L.F."/>
            <person name="Lazarevic D."/>
            <person name="Lipovich L."/>
            <person name="Liu J."/>
            <person name="Liuni S."/>
            <person name="McWilliam S."/>
            <person name="Madan Babu M."/>
            <person name="Madera M."/>
            <person name="Marchionni L."/>
            <person name="Matsuda H."/>
            <person name="Matsuzawa S."/>
            <person name="Miki H."/>
            <person name="Mignone F."/>
            <person name="Miyake S."/>
            <person name="Morris K."/>
            <person name="Mottagui-Tabar S."/>
            <person name="Mulder N."/>
            <person name="Nakano N."/>
            <person name="Nakauchi H."/>
            <person name="Ng P."/>
            <person name="Nilsson R."/>
            <person name="Nishiguchi S."/>
            <person name="Nishikawa S."/>
            <person name="Nori F."/>
            <person name="Ohara O."/>
            <person name="Okazaki Y."/>
            <person name="Orlando V."/>
            <person name="Pang K.C."/>
            <person name="Pavan W.J."/>
            <person name="Pavesi G."/>
            <person name="Pesole G."/>
            <person name="Petrovsky N."/>
            <person name="Piazza S."/>
            <person name="Reed J."/>
            <person name="Reid J.F."/>
            <person name="Ring B.Z."/>
            <person name="Ringwald M."/>
            <person name="Rost B."/>
            <person name="Ruan Y."/>
            <person name="Salzberg S.L."/>
            <person name="Sandelin A."/>
            <person name="Schneider C."/>
            <person name="Schoenbach C."/>
            <person name="Sekiguchi K."/>
            <person name="Semple C.A."/>
            <person name="Seno S."/>
            <person name="Sessa L."/>
            <person name="Sheng Y."/>
            <person name="Shibata Y."/>
            <person name="Shimada H."/>
            <person name="Shimada K."/>
            <person name="Silva D."/>
            <person name="Sinclair B."/>
            <person name="Sperling S."/>
            <person name="Stupka E."/>
            <person name="Sugiura K."/>
            <person name="Sultana R."/>
            <person name="Takenaka Y."/>
            <person name="Taki K."/>
            <person name="Tammoja K."/>
            <person name="Tan S.L."/>
            <person name="Tang S."/>
            <person name="Taylor M.S."/>
            <person name="Tegner J."/>
            <person name="Teichmann S.A."/>
            <person name="Ueda H.R."/>
            <person name="van Nimwegen E."/>
            <person name="Verardo R."/>
            <person name="Wei C.L."/>
            <person name="Yagi K."/>
            <person name="Yamanishi H."/>
            <person name="Zabarovsky E."/>
            <person name="Zhu S."/>
            <person name="Zimmer A."/>
            <person name="Hide W."/>
            <person name="Bult C."/>
            <person name="Grimmond S.M."/>
            <person name="Teasdale R.D."/>
            <person name="Liu E.T."/>
            <person name="Brusic V."/>
            <person name="Quackenbush J."/>
            <person name="Wahlestedt C."/>
            <person name="Mattick J.S."/>
            <person name="Hume D.A."/>
            <person name="Kai C."/>
            <person name="Sasaki D."/>
            <person name="Tomaru Y."/>
            <person name="Fukuda S."/>
            <person name="Kanamori-Katayama M."/>
            <person name="Suzuki M."/>
            <person name="Aoki J."/>
            <person name="Arakawa T."/>
            <person name="Iida J."/>
            <person name="Imamura K."/>
            <person name="Itoh M."/>
            <person name="Kato T."/>
            <person name="Kawaji H."/>
            <person name="Kawagashira N."/>
            <person name="Kawashima T."/>
            <person name="Kojima M."/>
            <person name="Kondo S."/>
            <person name="Konno H."/>
            <person name="Nakano K."/>
            <person name="Ninomiya N."/>
            <person name="Nishio T."/>
            <person name="Okada M."/>
            <person name="Plessy C."/>
            <person name="Shibata K."/>
            <person name="Shiraki T."/>
            <person name="Suzuki S."/>
            <person name="Tagami M."/>
            <person name="Waki K."/>
            <person name="Watahiki A."/>
            <person name="Okamura-Oho Y."/>
            <person name="Suzuki H."/>
            <person name="Kawai J."/>
            <person name="Hayashizaki Y."/>
        </authorList>
    </citation>
    <scope>NUCLEOTIDE SEQUENCE [LARGE SCALE MRNA]</scope>
    <source>
        <strain>C57BL/6J</strain>
        <tissue>Skin</tissue>
    </source>
</reference>
<reference key="3">
    <citation type="journal article" date="1996" name="Proc. Natl. Acad. Sci. U.S.A.">
        <title>Embryonic stem cells express multiple Eph-subfamily receptor tyrosine kinases.</title>
        <authorList>
            <person name="Lickliter J.D."/>
            <person name="Smith F.M."/>
            <person name="Olsson J.E."/>
            <person name="Mackwell K.L."/>
            <person name="Boyd A.W."/>
        </authorList>
    </citation>
    <scope>NUCLEOTIDE SEQUENCE [MRNA] OF 281-814</scope>
    <source>
        <strain>129/Sv</strain>
    </source>
</reference>
<reference key="4">
    <citation type="journal article" date="2008" name="Genesis">
        <title>Generation and characterization of EphA1 receptor tyrosine kinase reporter knockout mice.</title>
        <authorList>
            <person name="Duffy S.L."/>
            <person name="Coulthard M.G."/>
            <person name="Spanevello M.D."/>
            <person name="Herath N.I."/>
            <person name="Yeadon T.M."/>
            <person name="McCarron J.K."/>
            <person name="Carter J.C."/>
            <person name="Tonks I.D."/>
            <person name="Kay G.F."/>
            <person name="Phillips G.E."/>
            <person name="Boyd A.W."/>
        </authorList>
    </citation>
    <scope>DISRUPTION PHENOTYPE</scope>
    <scope>FUNCTION IN APOPTOSIS</scope>
    <scope>TISSUE SPECIFICITY</scope>
</reference>
<reference key="5">
    <citation type="journal article" date="2010" name="Cell">
        <title>A tissue-specific atlas of mouse protein phosphorylation and expression.</title>
        <authorList>
            <person name="Huttlin E.L."/>
            <person name="Jedrychowski M.P."/>
            <person name="Elias J.E."/>
            <person name="Goswami T."/>
            <person name="Rad R."/>
            <person name="Beausoleil S.A."/>
            <person name="Villen J."/>
            <person name="Haas W."/>
            <person name="Sowa M.E."/>
            <person name="Gygi S.P."/>
        </authorList>
    </citation>
    <scope>IDENTIFICATION BY MASS SPECTROMETRY [LARGE SCALE ANALYSIS]</scope>
    <source>
        <tissue>Lung</tissue>
    </source>
</reference>
<reference key="6">
    <citation type="journal article" date="2016" name="Front. Cell Dev. Biol.">
        <title>Gene expression profiling of muscle stem cells identifies novel regulators of postnatal myogenesis.</title>
        <authorList>
            <person name="Alonso-Martin S."/>
            <person name="Rochat A."/>
            <person name="Mademtzoglou D."/>
            <person name="Morais J."/>
            <person name="de Reynies A."/>
            <person name="Aurade F."/>
            <person name="Chang T.H."/>
            <person name="Zammit P.S."/>
            <person name="Relaix F."/>
        </authorList>
    </citation>
    <scope>DEVELOPMENTAL STAGE</scope>
    <scope>TISSUE SPECIFICITY</scope>
</reference>
<reference key="7">
    <citation type="submission" date="2005-11" db="PDB data bank">
        <title>The solution structure of the second fibronectin type III domain of mouse ephrin type-A receptor 1.</title>
        <authorList>
            <consortium name="RIKEN structural genomics initiative (RSGI)"/>
        </authorList>
    </citation>
    <scope>STRUCTURE BY NMR OF 446-539</scope>
</reference>
<sequence length="977" mass="108578">MERRWPLGLALLLLLLCAPLPPGARAEEVTLMDTSTAQGELGWLLDPPETGWSEVQQMLNGTPLYMYQDCPIQEGGDTDHWLRSNWIYRGEEASRIYVELQFTVRDCKSFPGGAGPLGCKETFNLFYMESDQDVGIQLRRPLFQKVTTVAADQSFTIRDLASGSVKLNVERCSLGHLTRRGLYLAFHNPGSCVALVSVRVFYQRCAETVHGLAHFPDTLPGPGGLVEVAGTCLSHAQISLGSSGTPRMHCSPDGEWLVPVGQCQCEPGYEESSGNVGCTACPTGFYRVDMNTLRCLKCPQHSIAESEGSTICTCENGHYRAPGEGPQVACTRPPSAPQNLSFSTSGTQLSLRWEPPRDTGGRHDIRYSVECLQCRGIAQDGGPCQPCGKGVHFSPAASGLTTSTVQVQGLEPYANYTFTVKSQNRVSGLDSSSPSSASLSINMGHAESLSGLSLKLVKKEPRQLELTWAGSRPRNPGGNLSYELHVLNQDEEWHQMVLEPRVLLTKLQPDTTYIVRVRTLTPLGPGPFSPDHEFRTSPPVSRSLTGGEIVAVIFGLLLGIALLIGIYVFRSRRGQRQRQQRQRERTTNVDREDKLWLKPYVDLQAYEDPAQGALDFAQELDPAWLIVDTVIGEGEFGEVYRGALRLPSQDCKTVAIKTLKDTSPDGYWWNFLREATIMGQFNHPHILRLEGVITKRKPIMIITEFMENGALDAFLKEREDQLAPGQLVAMLLGIASGMNCLSGHNYVHRDLAARNILVNQNLCCKVSDFGLTRLLDDFDGTYETQGGKIPIRWTAPEAIAHRIFTTASDVWSFGIVMWEVLSFGDKPYGEMSNQEVMKSIEDGYRLPPPVDCPAPLYELMKNCWAYDRARRPHFLQLQAHLEQLLTDPHSLRTIANFDPRVTLRLPSLSGSDGIPYRSVSEWLESIRMKRYILHFRSAGLDTMECVLELTAEDLTQMGITLPGHQKRILCSIQGFKD</sequence>
<name>EPHA1_MOUSE</name>
<proteinExistence type="evidence at protein level"/>
<evidence type="ECO:0000250" key="1"/>
<evidence type="ECO:0000250" key="2">
    <source>
        <dbReference type="UniProtKB" id="P21709"/>
    </source>
</evidence>
<evidence type="ECO:0000255" key="3"/>
<evidence type="ECO:0000255" key="4">
    <source>
        <dbReference type="PROSITE-ProRule" id="PRU00159"/>
    </source>
</evidence>
<evidence type="ECO:0000255" key="5">
    <source>
        <dbReference type="PROSITE-ProRule" id="PRU00184"/>
    </source>
</evidence>
<evidence type="ECO:0000255" key="6">
    <source>
        <dbReference type="PROSITE-ProRule" id="PRU00316"/>
    </source>
</evidence>
<evidence type="ECO:0000255" key="7">
    <source>
        <dbReference type="PROSITE-ProRule" id="PRU00883"/>
    </source>
</evidence>
<evidence type="ECO:0000255" key="8">
    <source>
        <dbReference type="PROSITE-ProRule" id="PRU10028"/>
    </source>
</evidence>
<evidence type="ECO:0000269" key="9">
    <source>
    </source>
</evidence>
<evidence type="ECO:0000269" key="10">
    <source>
    </source>
</evidence>
<evidence type="ECO:0000269" key="11">
    <source>
    </source>
</evidence>
<evidence type="ECO:0000305" key="12"/>
<evidence type="ECO:0007829" key="13">
    <source>
        <dbReference type="PDB" id="1X5A"/>
    </source>
</evidence>
<comment type="function">
    <text evidence="10">Receptor tyrosine kinase which binds promiscuously membrane-bound ephrin-A family ligands residing on adjacent cells, leading to contact-dependent bidirectional signaling into neighboring cells. The signaling pathway downstream of the receptor is referred to as forward signaling while the signaling pathway downstream of the ephrin ligand is referred to as reverse signaling. Binds with a low affinity EFNA3 and EFNA4 and with a high affinity to EFNA1 which most probably constitutes its cognate/functional ligand. Upon activation by EFNA1 induces cell attachment to the extracellular matrix inhibiting cell spreading and motility through regulation of ILK and downstream RHOA and RAC. Also plays a role in angiogenesis and regulates cell proliferation. May play a role in apoptosis.</text>
</comment>
<comment type="catalytic activity">
    <reaction evidence="8">
        <text>L-tyrosyl-[protein] + ATP = O-phospho-L-tyrosyl-[protein] + ADP + H(+)</text>
        <dbReference type="Rhea" id="RHEA:10596"/>
        <dbReference type="Rhea" id="RHEA-COMP:10136"/>
        <dbReference type="Rhea" id="RHEA-COMP:20101"/>
        <dbReference type="ChEBI" id="CHEBI:15378"/>
        <dbReference type="ChEBI" id="CHEBI:30616"/>
        <dbReference type="ChEBI" id="CHEBI:46858"/>
        <dbReference type="ChEBI" id="CHEBI:61978"/>
        <dbReference type="ChEBI" id="CHEBI:456216"/>
        <dbReference type="EC" id="2.7.10.1"/>
    </reaction>
</comment>
<comment type="subunit">
    <text evidence="1">Homodimer. Forms a signaling complex with LCK; PTK2B/PYK2 and PI3-kinase upon activation by EFNA1; regulates T-lymphocytes migration. Interacts (via SAM domain) with ILK (via ANK repeats); stimulated by EFNA1 but independent of the kinase activity of EPHA1. Interacts (kinase activity-dependent) with PTK2/FAK1 (By similarity).</text>
</comment>
<comment type="subcellular location">
    <subcellularLocation>
        <location evidence="1">Cell membrane</location>
        <topology evidence="1">Single-pass type I membrane protein</topology>
    </subcellularLocation>
</comment>
<comment type="tissue specificity">
    <text evidence="9 10 11">Preferentially expressed in epithelial cells including skin, kidney, liver and thymus (PubMed:11519828, PubMed:18802966). Expressed in myogenic progenitor cells (PubMed:27446912).</text>
</comment>
<comment type="developmental stage">
    <text evidence="11">In myogenic progenitor cells, expressed during the acquisition of muscle stem cell properties, from 18.5 dpc to adulthood.</text>
</comment>
<comment type="PTM">
    <text evidence="1">Phosphorylated. Autophosphorylation is stimulated by its ligand EFNA1 (By similarity).</text>
</comment>
<comment type="PTM">
    <text evidence="1">Ubiquitinated.</text>
</comment>
<comment type="disruption phenotype">
    <text evidence="10">Mice display a partially-penetrant uterovaginal and tail development defects. The uterovaginal defect is due to a defect in apoptosis during development.</text>
</comment>
<comment type="similarity">
    <text evidence="4">Belongs to the protein kinase superfamily. Tyr protein kinase family. Ephrin receptor subfamily.</text>
</comment>
<accession>Q60750</accession>
<accession>Q8CED9</accession>
<accession>Q9ESJ2</accession>
<gene>
    <name type="primary">Epha1</name>
    <name type="synonym">Esk</name>
</gene>